<dbReference type="EMBL" id="DS232197">
    <property type="protein sequence ID" value="EDS37183.1"/>
    <property type="molecule type" value="Genomic_DNA"/>
</dbReference>
<dbReference type="SMR" id="B0WYS3"/>
<dbReference type="FunCoup" id="B0WYS3">
    <property type="interactions" value="2702"/>
</dbReference>
<dbReference type="STRING" id="7176.B0WYS3"/>
<dbReference type="EnsemblMetazoa" id="CPIJ012302-RA">
    <property type="protein sequence ID" value="CPIJ012302-PA"/>
    <property type="gene ID" value="CPIJ012302"/>
</dbReference>
<dbReference type="EnsemblMetazoa" id="CQUJHB003871.R5980">
    <property type="protein sequence ID" value="CQUJHB003871.P5980"/>
    <property type="gene ID" value="CQUJHB003871"/>
</dbReference>
<dbReference type="EnsemblMetazoa" id="XM_001862510.2">
    <property type="protein sequence ID" value="XP_001862545.1"/>
    <property type="gene ID" value="LOC6045145"/>
</dbReference>
<dbReference type="KEGG" id="cqu:CpipJ_CPIJ012302"/>
<dbReference type="CTD" id="23383"/>
<dbReference type="VEuPathDB" id="VectorBase:CPIJ012302"/>
<dbReference type="VEuPathDB" id="VectorBase:CQUJHB003871"/>
<dbReference type="eggNOG" id="KOG2300">
    <property type="taxonomic scope" value="Eukaryota"/>
</dbReference>
<dbReference type="HOGENOM" id="CLU_030238_0_0_1"/>
<dbReference type="InParanoid" id="B0WYS3"/>
<dbReference type="OMA" id="QDAWYLS"/>
<dbReference type="OrthoDB" id="5565328at2759"/>
<dbReference type="PhylomeDB" id="B0WYS3"/>
<dbReference type="Proteomes" id="UP000002320">
    <property type="component" value="Unassembled WGS sequence"/>
</dbReference>
<dbReference type="GO" id="GO:0000785">
    <property type="term" value="C:chromatin"/>
    <property type="evidence" value="ECO:0000250"/>
    <property type="project" value="UniProtKB"/>
</dbReference>
<dbReference type="GO" id="GO:0005654">
    <property type="term" value="C:nucleoplasm"/>
    <property type="evidence" value="ECO:0000250"/>
    <property type="project" value="UniProtKB"/>
</dbReference>
<dbReference type="GO" id="GO:0005634">
    <property type="term" value="C:nucleus"/>
    <property type="evidence" value="ECO:0000250"/>
    <property type="project" value="UniProtKB"/>
</dbReference>
<dbReference type="GO" id="GO:0032116">
    <property type="term" value="C:SMC loading complex"/>
    <property type="evidence" value="ECO:0000250"/>
    <property type="project" value="UniProtKB"/>
</dbReference>
<dbReference type="GO" id="GO:0051301">
    <property type="term" value="P:cell division"/>
    <property type="evidence" value="ECO:0007669"/>
    <property type="project" value="UniProtKB-KW"/>
</dbReference>
<dbReference type="GO" id="GO:0007059">
    <property type="term" value="P:chromosome segregation"/>
    <property type="evidence" value="ECO:0007669"/>
    <property type="project" value="UniProtKB-KW"/>
</dbReference>
<dbReference type="GO" id="GO:0034088">
    <property type="term" value="P:maintenance of mitotic sister chromatid cohesion"/>
    <property type="evidence" value="ECO:0000250"/>
    <property type="project" value="UniProtKB"/>
</dbReference>
<dbReference type="FunFam" id="1.25.40.10:FF:000373">
    <property type="entry name" value="MAU2 chromatid cohesion factor homolog"/>
    <property type="match status" value="1"/>
</dbReference>
<dbReference type="FunFam" id="1.25.40.10:FF:000915">
    <property type="entry name" value="MAU2 chromatid cohesion factor homolog"/>
    <property type="match status" value="1"/>
</dbReference>
<dbReference type="Gene3D" id="1.25.40.10">
    <property type="entry name" value="Tetratricopeptide repeat domain"/>
    <property type="match status" value="2"/>
</dbReference>
<dbReference type="InterPro" id="IPR019440">
    <property type="entry name" value="MAU2"/>
</dbReference>
<dbReference type="InterPro" id="IPR011990">
    <property type="entry name" value="TPR-like_helical_dom_sf"/>
</dbReference>
<dbReference type="PANTHER" id="PTHR21394">
    <property type="entry name" value="MAU2 CHROMATID COHESION FACTOR HOMOLOG"/>
    <property type="match status" value="1"/>
</dbReference>
<dbReference type="Pfam" id="PF10345">
    <property type="entry name" value="Cohesin_load"/>
    <property type="match status" value="1"/>
</dbReference>
<dbReference type="SUPFAM" id="SSF48452">
    <property type="entry name" value="TPR-like"/>
    <property type="match status" value="1"/>
</dbReference>
<proteinExistence type="inferred from homology"/>
<sequence length="616" mass="70131">MTSSQDACYISLLGLAEYFRTSSPPNIKKCIQCLQALFTFKPPLKVEARTHLQLGQILMAYTKNTELARNHLEQAWMLSENINNFDDVKFDTASLLAQLYQQQEQSSLAKPVLRKAIELSQHNVYWHCKLLFQLAQTHATDKEYALASELLAVGVESTDESNATYLKSLFLLSRAMIMMIERKSSDVLAILNQAGTIIDNAIQNIHLKEYLKVFFFVLQVCHYLQLGQVKTVKTSLKQLQQSIQTIMAPNWPSDEQIFGQNSTEMFMWLPKEQLYVLVYLVTVSHSMMAGYMDKAQKYTEKALTQIEKLKSQENKPILAVFQIILLEHIIMCRLVMGNKSLAIKEIALAKDVCLSSSHKFLLKKHSPQLHCLLGLYSMSASLFDHAERQFYTCIQETTERDLKLFANLNLAIVYLRMKREPDLRAILDQVQQENSLCSNSQALMGSFYYVQGLNAFHKSSFHEAKRFLRETLKMANAEDLNRLTSCSLVLLSHVFLSIGNSKESMNMVTPAMQLASKIPDIHVQLWGSAILKDLHRMLKEPALEQEAYNNHLNFSQNLIADQLKCTKFQEHTLINWIQGDPPMPMLTTQEPMMGEPSQAAAMRVAAGAPGQQVIFQ</sequence>
<name>SCC4_CULQU</name>
<organism>
    <name type="scientific">Culex quinquefasciatus</name>
    <name type="common">Southern house mosquito</name>
    <name type="synonym">Culex pungens</name>
    <dbReference type="NCBI Taxonomy" id="7176"/>
    <lineage>
        <taxon>Eukaryota</taxon>
        <taxon>Metazoa</taxon>
        <taxon>Ecdysozoa</taxon>
        <taxon>Arthropoda</taxon>
        <taxon>Hexapoda</taxon>
        <taxon>Insecta</taxon>
        <taxon>Pterygota</taxon>
        <taxon>Neoptera</taxon>
        <taxon>Endopterygota</taxon>
        <taxon>Diptera</taxon>
        <taxon>Nematocera</taxon>
        <taxon>Culicoidea</taxon>
        <taxon>Culicidae</taxon>
        <taxon>Culicinae</taxon>
        <taxon>Culicini</taxon>
        <taxon>Culex</taxon>
        <taxon>Culex</taxon>
    </lineage>
</organism>
<comment type="function">
    <text evidence="1">Required for association of the cohesin complex with chromatin during interphase. Plays a role in sister chromatid cohesion and normal progression through prometaphase (By similarity).</text>
</comment>
<comment type="subunit">
    <text evidence="1">Component of the cohesin loading complex.</text>
</comment>
<comment type="subcellular location">
    <subcellularLocation>
        <location evidence="1">Nucleus</location>
        <location evidence="1">Nucleoplasm</location>
    </subcellularLocation>
    <text evidence="1">Binds to chromatin from the end of mitosis until prophase.</text>
</comment>
<comment type="similarity">
    <text evidence="2">Belongs to the SCC4/mau-2 family.</text>
</comment>
<accession>B0WYS3</accession>
<gene>
    <name type="ORF">CPIJ012302</name>
</gene>
<feature type="chain" id="PRO_0000382728" description="MAU2 chromatid cohesion factor homolog">
    <location>
        <begin position="1"/>
        <end position="616"/>
    </location>
</feature>
<feature type="repeat" description="TPR 1">
    <location>
        <begin position="90"/>
        <end position="123"/>
    </location>
</feature>
<feature type="repeat" description="TPR 2">
    <location>
        <begin position="445"/>
        <end position="478"/>
    </location>
</feature>
<feature type="repeat" description="TPR 3">
    <location>
        <begin position="485"/>
        <end position="518"/>
    </location>
</feature>
<keyword id="KW-0131">Cell cycle</keyword>
<keyword id="KW-0132">Cell division</keyword>
<keyword id="KW-0159">Chromosome partition</keyword>
<keyword id="KW-0498">Mitosis</keyword>
<keyword id="KW-0539">Nucleus</keyword>
<keyword id="KW-1185">Reference proteome</keyword>
<keyword id="KW-0677">Repeat</keyword>
<keyword id="KW-0802">TPR repeat</keyword>
<protein>
    <recommendedName>
        <fullName>MAU2 chromatid cohesion factor homolog</fullName>
    </recommendedName>
    <alternativeName>
        <fullName>Cohesin loading complex subunit SCC4 homolog</fullName>
    </alternativeName>
</protein>
<reference key="1">
    <citation type="submission" date="2007-03" db="EMBL/GenBank/DDBJ databases">
        <title>Annotation of Culex pipiens quinquefasciatus.</title>
        <authorList>
            <consortium name="The Broad Institute Genome Sequencing Platform"/>
            <person name="Atkinson P.W."/>
            <person name="Hemingway J."/>
            <person name="Christensen B.M."/>
            <person name="Higgs S."/>
            <person name="Kodira C.D."/>
            <person name="Hannick L.I."/>
            <person name="Megy K."/>
            <person name="O'Leary S.B."/>
            <person name="Pearson M."/>
            <person name="Haas B.J."/>
            <person name="Mauceli E."/>
            <person name="Wortman J.R."/>
            <person name="Lee N.H."/>
            <person name="Guigo R."/>
            <person name="Stanke M."/>
            <person name="Alvarado L."/>
            <person name="Amedeo P."/>
            <person name="Antoine C.H."/>
            <person name="Arensburger P."/>
            <person name="Bidwell S.L."/>
            <person name="Crawford M."/>
            <person name="Camaro F."/>
            <person name="Devon K."/>
            <person name="Engels R."/>
            <person name="Hammond M."/>
            <person name="Howarth C."/>
            <person name="Koehrsen M."/>
            <person name="Lawson D."/>
            <person name="Montgomery P."/>
            <person name="Nene V."/>
            <person name="Nusbaum C."/>
            <person name="Puiu D."/>
            <person name="Romero-Severson J."/>
            <person name="Severson D.W."/>
            <person name="Shumway M."/>
            <person name="Sisk P."/>
            <person name="Stolte C."/>
            <person name="Zeng Q."/>
            <person name="Eisenstadt E."/>
            <person name="Fraser-Liggett C.M."/>
            <person name="Strausberg R."/>
            <person name="Galagan J."/>
            <person name="Birren B."/>
            <person name="Collins F.H."/>
        </authorList>
    </citation>
    <scope>NUCLEOTIDE SEQUENCE [LARGE SCALE GENOMIC DNA]</scope>
    <source>
        <strain>JHB</strain>
    </source>
</reference>
<evidence type="ECO:0000250" key="1"/>
<evidence type="ECO:0000305" key="2"/>